<keyword id="KW-1185">Reference proteome</keyword>
<reference key="1">
    <citation type="journal article" date="2009" name="Genome Res.">
        <title>Comparative genomics of protoploid Saccharomycetaceae.</title>
        <authorList>
            <consortium name="The Genolevures Consortium"/>
            <person name="Souciet J.-L."/>
            <person name="Dujon B."/>
            <person name="Gaillardin C."/>
            <person name="Johnston M."/>
            <person name="Baret P.V."/>
            <person name="Cliften P."/>
            <person name="Sherman D.J."/>
            <person name="Weissenbach J."/>
            <person name="Westhof E."/>
            <person name="Wincker P."/>
            <person name="Jubin C."/>
            <person name="Poulain J."/>
            <person name="Barbe V."/>
            <person name="Segurens B."/>
            <person name="Artiguenave F."/>
            <person name="Anthouard V."/>
            <person name="Vacherie B."/>
            <person name="Val M.-E."/>
            <person name="Fulton R.S."/>
            <person name="Minx P."/>
            <person name="Wilson R."/>
            <person name="Durrens P."/>
            <person name="Jean G."/>
            <person name="Marck C."/>
            <person name="Martin T."/>
            <person name="Nikolski M."/>
            <person name="Rolland T."/>
            <person name="Seret M.-L."/>
            <person name="Casaregola S."/>
            <person name="Despons L."/>
            <person name="Fairhead C."/>
            <person name="Fischer G."/>
            <person name="Lafontaine I."/>
            <person name="Leh V."/>
            <person name="Lemaire M."/>
            <person name="de Montigny J."/>
            <person name="Neuveglise C."/>
            <person name="Thierry A."/>
            <person name="Blanc-Lenfle I."/>
            <person name="Bleykasten C."/>
            <person name="Diffels J."/>
            <person name="Fritsch E."/>
            <person name="Frangeul L."/>
            <person name="Goeffon A."/>
            <person name="Jauniaux N."/>
            <person name="Kachouri-Lafond R."/>
            <person name="Payen C."/>
            <person name="Potier S."/>
            <person name="Pribylova L."/>
            <person name="Ozanne C."/>
            <person name="Richard G.-F."/>
            <person name="Sacerdot C."/>
            <person name="Straub M.-L."/>
            <person name="Talla E."/>
        </authorList>
    </citation>
    <scope>NUCLEOTIDE SEQUENCE [LARGE SCALE GENOMIC DNA]</scope>
    <source>
        <strain>ATCC 2623 / CBS 732 / BCRC 21506 / NBRC 1130 / NCYC 568 / NRRL Y-229</strain>
    </source>
</reference>
<accession>C5E1C0</accession>
<organism>
    <name type="scientific">Zygosaccharomyces rouxii (strain ATCC 2623 / CBS 732 / NBRC 1130 / NCYC 568 / NRRL Y-229)</name>
    <dbReference type="NCBI Taxonomy" id="559307"/>
    <lineage>
        <taxon>Eukaryota</taxon>
        <taxon>Fungi</taxon>
        <taxon>Dikarya</taxon>
        <taxon>Ascomycota</taxon>
        <taxon>Saccharomycotina</taxon>
        <taxon>Saccharomycetes</taxon>
        <taxon>Saccharomycetales</taxon>
        <taxon>Saccharomycetaceae</taxon>
        <taxon>Zygosaccharomyces</taxon>
    </lineage>
</organism>
<feature type="chain" id="PRO_0000407770" description="Maintenance of telomere capping protein 2">
    <location>
        <begin position="1"/>
        <end position="323"/>
    </location>
</feature>
<evidence type="ECO:0000250" key="1"/>
<evidence type="ECO:0000305" key="2"/>
<protein>
    <recommendedName>
        <fullName>Maintenance of telomere capping protein 2</fullName>
    </recommendedName>
</protein>
<name>MTC2_ZYGRC</name>
<comment type="function">
    <text evidence="1">May be involved in telomere capping.</text>
</comment>
<comment type="similarity">
    <text evidence="2">Belongs to the MTC2 family.</text>
</comment>
<gene>
    <name type="primary">MTC2</name>
    <name type="ordered locus">ZYRO0G19778g</name>
</gene>
<dbReference type="EMBL" id="CU928179">
    <property type="protein sequence ID" value="CAR29904.1"/>
    <property type="molecule type" value="Genomic_DNA"/>
</dbReference>
<dbReference type="RefSeq" id="XP_002498837.1">
    <property type="nucleotide sequence ID" value="XM_002498792.1"/>
</dbReference>
<dbReference type="FunCoup" id="C5E1C0">
    <property type="interactions" value="125"/>
</dbReference>
<dbReference type="STRING" id="559307.C5E1C0"/>
<dbReference type="GeneID" id="8206671"/>
<dbReference type="KEGG" id="zro:ZYRO0G19778g"/>
<dbReference type="HOGENOM" id="CLU_060779_1_0_1"/>
<dbReference type="InParanoid" id="C5E1C0"/>
<dbReference type="Proteomes" id="UP000008536">
    <property type="component" value="Chromosome G"/>
</dbReference>
<sequence>MAVDKLPDFISGLRFMVAAKKHLVYFYSMKESGSPTSEQIEIERQTSLLKNIVERSYLQERVSCYVLKNIPQEGLPTYNDQTHTGIEIIIIPQVHTLTKGDQNVLVRMMMASQVSRPVRLFIGMIPWDTTKESAMSGDIELALSSRITSEDWLKHKFWFACYEPDENEVFSPLIGALPESLEKAQYTDVHANRSIHRYILDVMIHLRMHKLLDTTKGGGIHTSALRDVLALSQLLALYRFNKAFVTPEHVKLACIWYFPLHVEFLKGSAMDTSVLYGSRPELVDGLLKCIADVKLSNTVETENPLFLETIVVQDVLNKVVPPV</sequence>
<proteinExistence type="inferred from homology"/>